<gene>
    <name evidence="1" type="primary">cobQ</name>
    <name type="ordered locus">SO_1038</name>
</gene>
<feature type="chain" id="PRO_0000141330" description="Cobyric acid synthase">
    <location>
        <begin position="1"/>
        <end position="510"/>
    </location>
</feature>
<feature type="domain" description="GATase cobBQ-type" evidence="1">
    <location>
        <begin position="249"/>
        <end position="458"/>
    </location>
</feature>
<feature type="active site" description="Nucleophile" evidence="1">
    <location>
        <position position="336"/>
    </location>
</feature>
<feature type="active site" evidence="1">
    <location>
        <position position="450"/>
    </location>
</feature>
<keyword id="KW-0169">Cobalamin biosynthesis</keyword>
<keyword id="KW-0315">Glutamine amidotransferase</keyword>
<keyword id="KW-1185">Reference proteome</keyword>
<accession>Q8EI15</accession>
<dbReference type="EMBL" id="AE014299">
    <property type="protein sequence ID" value="AAN54111.1"/>
    <property type="molecule type" value="Genomic_DNA"/>
</dbReference>
<dbReference type="RefSeq" id="NP_716666.1">
    <property type="nucleotide sequence ID" value="NC_004347.2"/>
</dbReference>
<dbReference type="RefSeq" id="WP_011071297.1">
    <property type="nucleotide sequence ID" value="NC_004347.2"/>
</dbReference>
<dbReference type="SMR" id="Q8EI15"/>
<dbReference type="STRING" id="211586.SO_1038"/>
<dbReference type="PaxDb" id="211586-SO_1038"/>
<dbReference type="KEGG" id="son:SO_1038"/>
<dbReference type="PATRIC" id="fig|211586.12.peg.995"/>
<dbReference type="eggNOG" id="COG1492">
    <property type="taxonomic scope" value="Bacteria"/>
</dbReference>
<dbReference type="HOGENOM" id="CLU_019250_2_2_6"/>
<dbReference type="OrthoDB" id="9808302at2"/>
<dbReference type="PhylomeDB" id="Q8EI15"/>
<dbReference type="BioCyc" id="SONE211586:G1GMP-961-MONOMER"/>
<dbReference type="UniPathway" id="UPA00148"/>
<dbReference type="Proteomes" id="UP000008186">
    <property type="component" value="Chromosome"/>
</dbReference>
<dbReference type="GO" id="GO:0015420">
    <property type="term" value="F:ABC-type vitamin B12 transporter activity"/>
    <property type="evidence" value="ECO:0007669"/>
    <property type="project" value="UniProtKB-UniRule"/>
</dbReference>
<dbReference type="GO" id="GO:0003824">
    <property type="term" value="F:catalytic activity"/>
    <property type="evidence" value="ECO:0007669"/>
    <property type="project" value="InterPro"/>
</dbReference>
<dbReference type="GO" id="GO:0009236">
    <property type="term" value="P:cobalamin biosynthetic process"/>
    <property type="evidence" value="ECO:0007669"/>
    <property type="project" value="UniProtKB-UniRule"/>
</dbReference>
<dbReference type="CDD" id="cd05389">
    <property type="entry name" value="CobQ_N"/>
    <property type="match status" value="1"/>
</dbReference>
<dbReference type="CDD" id="cd01750">
    <property type="entry name" value="GATase1_CobQ"/>
    <property type="match status" value="1"/>
</dbReference>
<dbReference type="FunFam" id="3.40.50.880:FF:000136">
    <property type="entry name" value="Cobyric acid synthase"/>
    <property type="match status" value="1"/>
</dbReference>
<dbReference type="Gene3D" id="3.40.50.880">
    <property type="match status" value="1"/>
</dbReference>
<dbReference type="Gene3D" id="3.40.50.300">
    <property type="entry name" value="P-loop containing nucleotide triphosphate hydrolases"/>
    <property type="match status" value="1"/>
</dbReference>
<dbReference type="HAMAP" id="MF_00028">
    <property type="entry name" value="CobQ"/>
    <property type="match status" value="1"/>
</dbReference>
<dbReference type="InterPro" id="IPR029062">
    <property type="entry name" value="Class_I_gatase-like"/>
</dbReference>
<dbReference type="InterPro" id="IPR002586">
    <property type="entry name" value="CobQ/CobB/MinD/ParA_Nub-bd_dom"/>
</dbReference>
<dbReference type="InterPro" id="IPR033949">
    <property type="entry name" value="CobQ_GATase1"/>
</dbReference>
<dbReference type="InterPro" id="IPR047045">
    <property type="entry name" value="CobQ_N"/>
</dbReference>
<dbReference type="InterPro" id="IPR004459">
    <property type="entry name" value="CobQ_synth"/>
</dbReference>
<dbReference type="InterPro" id="IPR011698">
    <property type="entry name" value="GATase_3"/>
</dbReference>
<dbReference type="InterPro" id="IPR027417">
    <property type="entry name" value="P-loop_NTPase"/>
</dbReference>
<dbReference type="NCBIfam" id="TIGR00313">
    <property type="entry name" value="cobQ"/>
    <property type="match status" value="1"/>
</dbReference>
<dbReference type="NCBIfam" id="NF001989">
    <property type="entry name" value="PRK00784.1"/>
    <property type="match status" value="1"/>
</dbReference>
<dbReference type="PANTHER" id="PTHR21343:SF1">
    <property type="entry name" value="COBYRIC ACID SYNTHASE"/>
    <property type="match status" value="1"/>
</dbReference>
<dbReference type="PANTHER" id="PTHR21343">
    <property type="entry name" value="DETHIOBIOTIN SYNTHETASE"/>
    <property type="match status" value="1"/>
</dbReference>
<dbReference type="Pfam" id="PF01656">
    <property type="entry name" value="CbiA"/>
    <property type="match status" value="1"/>
</dbReference>
<dbReference type="Pfam" id="PF07685">
    <property type="entry name" value="GATase_3"/>
    <property type="match status" value="1"/>
</dbReference>
<dbReference type="SUPFAM" id="SSF52317">
    <property type="entry name" value="Class I glutamine amidotransferase-like"/>
    <property type="match status" value="1"/>
</dbReference>
<dbReference type="SUPFAM" id="SSF52540">
    <property type="entry name" value="P-loop containing nucleoside triphosphate hydrolases"/>
    <property type="match status" value="1"/>
</dbReference>
<dbReference type="PROSITE" id="PS51274">
    <property type="entry name" value="GATASE_COBBQ"/>
    <property type="match status" value="1"/>
</dbReference>
<comment type="function">
    <text evidence="1">Catalyzes amidations at positions B, D, E, and G on adenosylcobyrinic A,C-diamide. NH(2) groups are provided by glutamine, and one molecule of ATP is hydrogenolyzed for each amidation.</text>
</comment>
<comment type="pathway">
    <text evidence="1">Cofactor biosynthesis; adenosylcobalamin biosynthesis.</text>
</comment>
<comment type="similarity">
    <text evidence="1">Belongs to the CobB/CobQ family. CobQ subfamily.</text>
</comment>
<evidence type="ECO:0000255" key="1">
    <source>
        <dbReference type="HAMAP-Rule" id="MF_00028"/>
    </source>
</evidence>
<proteinExistence type="inferred from homology"/>
<protein>
    <recommendedName>
        <fullName evidence="1">Cobyric acid synthase</fullName>
    </recommendedName>
</protein>
<name>COBQ_SHEON</name>
<sequence>MVQGTTSDAGKSTLVAGICRLLARQGVNVAPFKPQNMALNSAVTVDGGEIGRAQALQAAACYLVPHTDFNPILLKPSSDTGAQIIVQGKALTTLEASAFFGEKSKDYKAMALNAVLDSFERLGQQYHTIVVEGAGSPAEINLRAGDIANMGFAEAVDCPVIIIADIDKGGVFAHLVGTLALLSESEQARVKGFVINRFRGDISLLQSGIDWLEAYTQKPVLGVLPYLHDLHLDAEDALTDSPTKQAKSCFKVRVLVYPRTSNHTDVDPLRLHPDIDFDYVSLQTQALAQTPEIAADLLILPGSKNVRADLAFLREQGWDKQIAKHLRYGGKVLGICGGYQMLGERIADPLAIEDVFGTSQGLGYLPISTEFKAEKQLRCVAGELTLIGQTVAVKGYEIHCGESQYLTSSDAAKGAPLRLINELTCDEQAEKSFADGCLSEDGQVLGTYLHGLFDSPDACQLILRWAGLEDAQAIDINAIREQQLDRLADVLAEHLDLPQLQAILTASVKP</sequence>
<reference key="1">
    <citation type="journal article" date="2002" name="Nat. Biotechnol.">
        <title>Genome sequence of the dissimilatory metal ion-reducing bacterium Shewanella oneidensis.</title>
        <authorList>
            <person name="Heidelberg J.F."/>
            <person name="Paulsen I.T."/>
            <person name="Nelson K.E."/>
            <person name="Gaidos E.J."/>
            <person name="Nelson W.C."/>
            <person name="Read T.D."/>
            <person name="Eisen J.A."/>
            <person name="Seshadri R."/>
            <person name="Ward N.L."/>
            <person name="Methe B.A."/>
            <person name="Clayton R.A."/>
            <person name="Meyer T."/>
            <person name="Tsapin A."/>
            <person name="Scott J."/>
            <person name="Beanan M.J."/>
            <person name="Brinkac L.M."/>
            <person name="Daugherty S.C."/>
            <person name="DeBoy R.T."/>
            <person name="Dodson R.J."/>
            <person name="Durkin A.S."/>
            <person name="Haft D.H."/>
            <person name="Kolonay J.F."/>
            <person name="Madupu R."/>
            <person name="Peterson J.D."/>
            <person name="Umayam L.A."/>
            <person name="White O."/>
            <person name="Wolf A.M."/>
            <person name="Vamathevan J.J."/>
            <person name="Weidman J.F."/>
            <person name="Impraim M."/>
            <person name="Lee K."/>
            <person name="Berry K.J."/>
            <person name="Lee C."/>
            <person name="Mueller J."/>
            <person name="Khouri H.M."/>
            <person name="Gill J."/>
            <person name="Utterback T.R."/>
            <person name="McDonald L.A."/>
            <person name="Feldblyum T.V."/>
            <person name="Smith H.O."/>
            <person name="Venter J.C."/>
            <person name="Nealson K.H."/>
            <person name="Fraser C.M."/>
        </authorList>
    </citation>
    <scope>NUCLEOTIDE SEQUENCE [LARGE SCALE GENOMIC DNA]</scope>
    <source>
        <strain>ATCC 700550 / JCM 31522 / CIP 106686 / LMG 19005 / NCIMB 14063 / MR-1</strain>
    </source>
</reference>
<organism>
    <name type="scientific">Shewanella oneidensis (strain ATCC 700550 / JCM 31522 / CIP 106686 / LMG 19005 / NCIMB 14063 / MR-1)</name>
    <dbReference type="NCBI Taxonomy" id="211586"/>
    <lineage>
        <taxon>Bacteria</taxon>
        <taxon>Pseudomonadati</taxon>
        <taxon>Pseudomonadota</taxon>
        <taxon>Gammaproteobacteria</taxon>
        <taxon>Alteromonadales</taxon>
        <taxon>Shewanellaceae</taxon>
        <taxon>Shewanella</taxon>
    </lineage>
</organism>